<protein>
    <recommendedName>
        <fullName>DNA-binding protein inhibitor ID-4</fullName>
    </recommendedName>
    <alternativeName>
        <fullName>Inhibitor of DNA binding 4</fullName>
    </alternativeName>
    <alternativeName>
        <fullName>Inhibitor of differentiation 4</fullName>
    </alternativeName>
</protein>
<organism>
    <name type="scientific">Mus musculus</name>
    <name type="common">Mouse</name>
    <dbReference type="NCBI Taxonomy" id="10090"/>
    <lineage>
        <taxon>Eukaryota</taxon>
        <taxon>Metazoa</taxon>
        <taxon>Chordata</taxon>
        <taxon>Craniata</taxon>
        <taxon>Vertebrata</taxon>
        <taxon>Euteleostomi</taxon>
        <taxon>Mammalia</taxon>
        <taxon>Eutheria</taxon>
        <taxon>Euarchontoglires</taxon>
        <taxon>Glires</taxon>
        <taxon>Rodentia</taxon>
        <taxon>Myomorpha</taxon>
        <taxon>Muroidea</taxon>
        <taxon>Muridae</taxon>
        <taxon>Murinae</taxon>
        <taxon>Mus</taxon>
        <taxon>Mus</taxon>
    </lineage>
</organism>
<accession>P41139</accession>
<sequence length="161" mass="16596">MKAVSPVRPSGRKAPSGCGGGELALRCLAEHGHSLGGSAAAAAAAAAARCKAAEAAADEPALCLQCDMNDCYSRLRRLVPTIPPNKKVSKVEILQHVIDYILDLQLALETHPALLRQPPPPAPPLHPAGACPVAPPRTPLTALNTDPAGAVNKQGDSILCR</sequence>
<keyword id="KW-0539">Nucleus</keyword>
<keyword id="KW-1185">Reference proteome</keyword>
<keyword id="KW-0678">Repressor</keyword>
<keyword id="KW-0804">Transcription</keyword>
<keyword id="KW-0805">Transcription regulation</keyword>
<name>ID4_MOUSE</name>
<dbReference type="EMBL" id="X75018">
    <property type="protein sequence ID" value="CAA52926.1"/>
    <property type="molecule type" value="mRNA"/>
</dbReference>
<dbReference type="EMBL" id="AJ001972">
    <property type="protein sequence ID" value="CAA05120.1"/>
    <property type="molecule type" value="Genomic_DNA"/>
</dbReference>
<dbReference type="EMBL" id="AF077859">
    <property type="protein sequence ID" value="AAD05213.1"/>
    <property type="molecule type" value="Genomic_DNA"/>
</dbReference>
<dbReference type="CCDS" id="CCDS26492.1"/>
<dbReference type="PIR" id="S43260">
    <property type="entry name" value="S43260"/>
</dbReference>
<dbReference type="RefSeq" id="NP_112443.1">
    <property type="nucleotide sequence ID" value="NM_031166.3"/>
</dbReference>
<dbReference type="SMR" id="P41139"/>
<dbReference type="BioGRID" id="200508">
    <property type="interactions" value="2"/>
</dbReference>
<dbReference type="FunCoup" id="P41139">
    <property type="interactions" value="2539"/>
</dbReference>
<dbReference type="IntAct" id="P41139">
    <property type="interactions" value="3"/>
</dbReference>
<dbReference type="STRING" id="10090.ENSMUSP00000021810"/>
<dbReference type="PhosphoSitePlus" id="P41139"/>
<dbReference type="PaxDb" id="10090-ENSMUSP00000021810"/>
<dbReference type="PeptideAtlas" id="P41139"/>
<dbReference type="ProteomicsDB" id="273262"/>
<dbReference type="Pumba" id="P41139"/>
<dbReference type="Antibodypedia" id="10414">
    <property type="antibodies" value="386 antibodies from 33 providers"/>
</dbReference>
<dbReference type="DNASU" id="15904"/>
<dbReference type="Ensembl" id="ENSMUST00000021810.3">
    <property type="protein sequence ID" value="ENSMUSP00000021810.2"/>
    <property type="gene ID" value="ENSMUSG00000021379.3"/>
</dbReference>
<dbReference type="GeneID" id="15904"/>
<dbReference type="KEGG" id="mmu:15904"/>
<dbReference type="UCSC" id="uc007qid.1">
    <property type="organism name" value="mouse"/>
</dbReference>
<dbReference type="AGR" id="MGI:99414"/>
<dbReference type="CTD" id="3400"/>
<dbReference type="MGI" id="MGI:99414">
    <property type="gene designation" value="Id4"/>
</dbReference>
<dbReference type="VEuPathDB" id="HostDB:ENSMUSG00000021379"/>
<dbReference type="eggNOG" id="ENOG502S1WX">
    <property type="taxonomic scope" value="Eukaryota"/>
</dbReference>
<dbReference type="GeneTree" id="ENSGT00940000162435"/>
<dbReference type="HOGENOM" id="CLU_116790_2_0_1"/>
<dbReference type="InParanoid" id="P41139"/>
<dbReference type="OMA" id="FNIARCR"/>
<dbReference type="OrthoDB" id="10047910at2759"/>
<dbReference type="PhylomeDB" id="P41139"/>
<dbReference type="TreeFam" id="TF326217"/>
<dbReference type="BioGRID-ORCS" id="15904">
    <property type="hits" value="1 hit in 75 CRISPR screens"/>
</dbReference>
<dbReference type="ChiTaRS" id="Id4">
    <property type="organism name" value="mouse"/>
</dbReference>
<dbReference type="PRO" id="PR:P41139"/>
<dbReference type="Proteomes" id="UP000000589">
    <property type="component" value="Chromosome 13"/>
</dbReference>
<dbReference type="RNAct" id="P41139">
    <property type="molecule type" value="protein"/>
</dbReference>
<dbReference type="Bgee" id="ENSMUSG00000021379">
    <property type="expression patterns" value="Expressed in ureter smooth muscle and 280 other cell types or tissues"/>
</dbReference>
<dbReference type="ExpressionAtlas" id="P41139">
    <property type="expression patterns" value="baseline and differential"/>
</dbReference>
<dbReference type="GO" id="GO:0005737">
    <property type="term" value="C:cytoplasm"/>
    <property type="evidence" value="ECO:0000314"/>
    <property type="project" value="MGI"/>
</dbReference>
<dbReference type="GO" id="GO:0005654">
    <property type="term" value="C:nucleoplasm"/>
    <property type="evidence" value="ECO:0000304"/>
    <property type="project" value="Reactome"/>
</dbReference>
<dbReference type="GO" id="GO:0005634">
    <property type="term" value="C:nucleus"/>
    <property type="evidence" value="ECO:0000314"/>
    <property type="project" value="MGI"/>
</dbReference>
<dbReference type="GO" id="GO:0046983">
    <property type="term" value="F:protein dimerization activity"/>
    <property type="evidence" value="ECO:0007669"/>
    <property type="project" value="InterPro"/>
</dbReference>
<dbReference type="GO" id="GO:0061629">
    <property type="term" value="F:RNA polymerase II-specific DNA-binding transcription factor binding"/>
    <property type="evidence" value="ECO:0000353"/>
    <property type="project" value="MGI"/>
</dbReference>
<dbReference type="GO" id="GO:0140416">
    <property type="term" value="F:transcription regulator inhibitor activity"/>
    <property type="evidence" value="ECO:0007669"/>
    <property type="project" value="Ensembl"/>
</dbReference>
<dbReference type="GO" id="GO:0048708">
    <property type="term" value="P:astrocyte differentiation"/>
    <property type="evidence" value="ECO:0000316"/>
    <property type="project" value="MGI"/>
</dbReference>
<dbReference type="GO" id="GO:0007420">
    <property type="term" value="P:brain development"/>
    <property type="evidence" value="ECO:0000315"/>
    <property type="project" value="MGI"/>
</dbReference>
<dbReference type="GO" id="GO:0008283">
    <property type="term" value="P:cell population proliferation"/>
    <property type="evidence" value="ECO:0000315"/>
    <property type="project" value="MGI"/>
</dbReference>
<dbReference type="GO" id="GO:0022010">
    <property type="term" value="P:central nervous system myelination"/>
    <property type="evidence" value="ECO:0000315"/>
    <property type="project" value="MGI"/>
</dbReference>
<dbReference type="GO" id="GO:0021953">
    <property type="term" value="P:central nervous system neuron differentiation"/>
    <property type="evidence" value="ECO:0000315"/>
    <property type="project" value="MGI"/>
</dbReference>
<dbReference type="GO" id="GO:0021895">
    <property type="term" value="P:cerebral cortex neuron differentiation"/>
    <property type="evidence" value="ECO:0000315"/>
    <property type="project" value="MGI"/>
</dbReference>
<dbReference type="GO" id="GO:0007623">
    <property type="term" value="P:circadian rhythm"/>
    <property type="evidence" value="ECO:0000270"/>
    <property type="project" value="UniProtKB"/>
</dbReference>
<dbReference type="GO" id="GO:0045444">
    <property type="term" value="P:fat cell differentiation"/>
    <property type="evidence" value="ECO:0000315"/>
    <property type="project" value="MGI"/>
</dbReference>
<dbReference type="GO" id="GO:0000082">
    <property type="term" value="P:G1/S transition of mitotic cell cycle"/>
    <property type="evidence" value="ECO:0000315"/>
    <property type="project" value="MGI"/>
</dbReference>
<dbReference type="GO" id="GO:0021766">
    <property type="term" value="P:hippocampus development"/>
    <property type="evidence" value="ECO:0000315"/>
    <property type="project" value="MGI"/>
</dbReference>
<dbReference type="GO" id="GO:0048712">
    <property type="term" value="P:negative regulation of astrocyte differentiation"/>
    <property type="evidence" value="ECO:0000316"/>
    <property type="project" value="MGI"/>
</dbReference>
<dbReference type="GO" id="GO:0045599">
    <property type="term" value="P:negative regulation of fat cell differentiation"/>
    <property type="evidence" value="ECO:0000315"/>
    <property type="project" value="MGI"/>
</dbReference>
<dbReference type="GO" id="GO:0045665">
    <property type="term" value="P:negative regulation of neuron differentiation"/>
    <property type="evidence" value="ECO:0000315"/>
    <property type="project" value="MGI"/>
</dbReference>
<dbReference type="GO" id="GO:0048715">
    <property type="term" value="P:negative regulation of oligodendrocyte differentiation"/>
    <property type="evidence" value="ECO:0000315"/>
    <property type="project" value="MGI"/>
</dbReference>
<dbReference type="GO" id="GO:0000122">
    <property type="term" value="P:negative regulation of transcription by RNA polymerase II"/>
    <property type="evidence" value="ECO:0000314"/>
    <property type="project" value="MGI"/>
</dbReference>
<dbReference type="GO" id="GO:0007405">
    <property type="term" value="P:neuroblast proliferation"/>
    <property type="evidence" value="ECO:0000315"/>
    <property type="project" value="MGI"/>
</dbReference>
<dbReference type="GO" id="GO:0048709">
    <property type="term" value="P:oligodendrocyte differentiation"/>
    <property type="evidence" value="ECO:0000315"/>
    <property type="project" value="MGI"/>
</dbReference>
<dbReference type="GO" id="GO:0001649">
    <property type="term" value="P:osteoblast differentiation"/>
    <property type="evidence" value="ECO:0000315"/>
    <property type="project" value="MGI"/>
</dbReference>
<dbReference type="GO" id="GO:0008284">
    <property type="term" value="P:positive regulation of cell population proliferation"/>
    <property type="evidence" value="ECO:0000315"/>
    <property type="project" value="MGI"/>
</dbReference>
<dbReference type="GO" id="GO:0010628">
    <property type="term" value="P:positive regulation of gene expression"/>
    <property type="evidence" value="ECO:0000315"/>
    <property type="project" value="MGI"/>
</dbReference>
<dbReference type="GO" id="GO:0002052">
    <property type="term" value="P:positive regulation of neuroblast proliferation"/>
    <property type="evidence" value="ECO:0000315"/>
    <property type="project" value="MGI"/>
</dbReference>
<dbReference type="GO" id="GO:0045944">
    <property type="term" value="P:positive regulation of transcription by RNA polymerase II"/>
    <property type="evidence" value="ECO:0000316"/>
    <property type="project" value="MGI"/>
</dbReference>
<dbReference type="GO" id="GO:0060740">
    <property type="term" value="P:prostate gland epithelium morphogenesis"/>
    <property type="evidence" value="ECO:0000315"/>
    <property type="project" value="MGI"/>
</dbReference>
<dbReference type="GO" id="GO:0060512">
    <property type="term" value="P:prostate gland morphogenesis"/>
    <property type="evidence" value="ECO:0000315"/>
    <property type="project" value="MGI"/>
</dbReference>
<dbReference type="GO" id="GO:0060741">
    <property type="term" value="P:prostate gland stromal morphogenesis"/>
    <property type="evidence" value="ECO:0000315"/>
    <property type="project" value="MGI"/>
</dbReference>
<dbReference type="GO" id="GO:0008104">
    <property type="term" value="P:protein localization"/>
    <property type="evidence" value="ECO:0000315"/>
    <property type="project" value="MGI"/>
</dbReference>
<dbReference type="GO" id="GO:0061682">
    <property type="term" value="P:seminal vesicle morphogenesis"/>
    <property type="evidence" value="ECO:0000315"/>
    <property type="project" value="MGI"/>
</dbReference>
<dbReference type="CDD" id="cd19694">
    <property type="entry name" value="bHLH_dnHLH_ID4"/>
    <property type="match status" value="1"/>
</dbReference>
<dbReference type="FunFam" id="4.10.280.10:FF:000048">
    <property type="entry name" value="DNA-binding protein inhibitor ID-4"/>
    <property type="match status" value="1"/>
</dbReference>
<dbReference type="Gene3D" id="4.10.280.10">
    <property type="entry name" value="Helix-loop-helix DNA-binding domain"/>
    <property type="match status" value="1"/>
</dbReference>
<dbReference type="InterPro" id="IPR011598">
    <property type="entry name" value="bHLH_dom"/>
</dbReference>
<dbReference type="InterPro" id="IPR026052">
    <property type="entry name" value="DNA-bd_prot-inh"/>
</dbReference>
<dbReference type="InterPro" id="IPR036638">
    <property type="entry name" value="HLH_DNA-bd_sf"/>
</dbReference>
<dbReference type="PANTHER" id="PTHR11723">
    <property type="entry name" value="DNA-BINDING PROTEIN INHIBITOR"/>
    <property type="match status" value="1"/>
</dbReference>
<dbReference type="PANTHER" id="PTHR11723:SF6">
    <property type="entry name" value="DNA-BINDING PROTEIN INHIBITOR ID-4"/>
    <property type="match status" value="1"/>
</dbReference>
<dbReference type="Pfam" id="PF00010">
    <property type="entry name" value="HLH"/>
    <property type="match status" value="1"/>
</dbReference>
<dbReference type="SMART" id="SM00353">
    <property type="entry name" value="HLH"/>
    <property type="match status" value="1"/>
</dbReference>
<dbReference type="SUPFAM" id="SSF47459">
    <property type="entry name" value="HLH, helix-loop-helix DNA-binding domain"/>
    <property type="match status" value="1"/>
</dbReference>
<dbReference type="PROSITE" id="PS50888">
    <property type="entry name" value="BHLH"/>
    <property type="match status" value="1"/>
</dbReference>
<gene>
    <name type="primary">Id4</name>
    <name type="synonym">Id-4</name>
    <name type="synonym">Idb4</name>
</gene>
<evidence type="ECO:0000255" key="1">
    <source>
        <dbReference type="PROSITE-ProRule" id="PRU00981"/>
    </source>
</evidence>
<evidence type="ECO:0000269" key="2">
    <source>
    </source>
</evidence>
<feature type="chain" id="PRO_0000127251" description="DNA-binding protein inhibitor ID-4">
    <location>
        <begin position="1"/>
        <end position="161"/>
    </location>
</feature>
<feature type="domain" description="bHLH" evidence="1">
    <location>
        <begin position="52"/>
        <end position="104"/>
    </location>
</feature>
<comment type="function">
    <text>Transcriptional regulator (lacking a basic DNA binding domain) which negatively regulates the basic helix-loop-helix (bHLH) transcription factors by forming heterodimers and inhibiting their DNA binding and transcriptional activity. Implicated in regulating a variety of cellular processes, including cellular growth, senescence, differentiation, apoptosis, angiogenesis, and neoplastic transformation.</text>
</comment>
<comment type="subunit">
    <text>Heterodimer with other HLH proteins.</text>
</comment>
<comment type="interaction">
    <interactant intactId="EBI-1213725">
        <id>P41139</id>
    </interactant>
    <interactant intactId="EBI-1213712">
        <id>Q9JKN5</id>
        <label>Olig1</label>
    </interactant>
    <organismsDiffer>false</organismsDiffer>
    <experiments>5</experiments>
</comment>
<comment type="interaction">
    <interactant intactId="EBI-1213725">
        <id>P41139</id>
    </interactant>
    <interactant intactId="EBI-1213740">
        <id>Q9EQW6</id>
        <label>Olig2</label>
    </interactant>
    <organismsDiffer>false</organismsDiffer>
    <experiments>5</experiments>
</comment>
<comment type="subcellular location">
    <subcellularLocation>
        <location>Nucleus</location>
    </subcellularLocation>
</comment>
<comment type="induction">
    <text evidence="2">Expressed in a circadian manner in the suprachiasmatic nucleus (SCN) of the brain with peak levels between CT16 and CT20.</text>
</comment>
<comment type="disruption phenotype">
    <text evidence="2">Mice do not exhibit a noticeable circadian phenotype.</text>
</comment>
<reference key="1">
    <citation type="journal article" date="1994" name="Nucleic Acids Res.">
        <title>The expression pattern of Id4, a novel dominant negative helix-loop-helix protein, is distinct from Id1, Id2 and Id3.</title>
        <authorList>
            <person name="Riechmann V."/>
            <person name="van Cruechten I."/>
            <person name="Sablitzky F."/>
        </authorList>
    </citation>
    <scope>NUCLEOTIDE SEQUENCE [MRNA]</scope>
    <source>
        <strain>BALB/cJ</strain>
        <tissue>Bone marrow</tissue>
    </source>
</reference>
<reference key="2">
    <citation type="journal article" date="1998" name="Biochim. Biophys. Acta">
        <title>Structure, chromosomal localisation and expression of the murine dominant negative helix-loop-helix Id4 gene.</title>
        <authorList>
            <person name="van Cruechten I."/>
            <person name="Cinato E."/>
            <person name="Fox M."/>
            <person name="King E.R."/>
            <person name="Newton J.S."/>
            <person name="Riechmann V."/>
            <person name="Sablitzky F."/>
        </authorList>
    </citation>
    <scope>NUCLEOTIDE SEQUENCE [GENOMIC DNA]</scope>
</reference>
<reference key="3">
    <citation type="journal article" date="1998" name="Gene">
        <title>The mouse Id2 and Id4 genes: structural organization and chromosomal localization.</title>
        <authorList>
            <person name="Mantani A."/>
            <person name="Hernandez M.-C."/>
            <person name="Kuo W.-L."/>
            <person name="Israel M.A."/>
        </authorList>
    </citation>
    <scope>NUCLEOTIDE SEQUENCE [GENOMIC DNA]</scope>
</reference>
<reference key="4">
    <citation type="journal article" date="2009" name="Curr. Biol.">
        <title>A role for Id2 in regulating photic entrainment of the mammalian circadian system.</title>
        <authorList>
            <person name="Duffield G.E."/>
            <person name="Watson N.P."/>
            <person name="Mantani A."/>
            <person name="Peirson S.N."/>
            <person name="Robles-Murguia M."/>
            <person name="Loros J.J."/>
            <person name="Israel M.A."/>
            <person name="Dunlap J.C."/>
        </authorList>
    </citation>
    <scope>INDUCTION</scope>
    <scope>DISRUPTION PHENOTYPE</scope>
</reference>
<proteinExistence type="evidence at protein level"/>